<geneLocation type="chloroplast"/>
<evidence type="ECO:0000255" key="1">
    <source>
        <dbReference type="HAMAP-Rule" id="MF_01378"/>
    </source>
</evidence>
<evidence type="ECO:0000305" key="2"/>
<keyword id="KW-0150">Chloroplast</keyword>
<keyword id="KW-0249">Electron transport</keyword>
<keyword id="KW-0349">Heme</keyword>
<keyword id="KW-0408">Iron</keyword>
<keyword id="KW-0472">Membrane</keyword>
<keyword id="KW-0479">Metal-binding</keyword>
<keyword id="KW-0602">Photosynthesis</keyword>
<keyword id="KW-0604">Photosystem II</keyword>
<keyword id="KW-0934">Plastid</keyword>
<keyword id="KW-1185">Reference proteome</keyword>
<keyword id="KW-0732">Signal</keyword>
<keyword id="KW-0793">Thylakoid</keyword>
<keyword id="KW-0813">Transport</keyword>
<sequence>MFKKSSQLFSLVFFTIFSIFIGTASAIDLDEATRTVVVDSSGKTIVLTPEQVKRGKRLFNATCGACHVGGVTKTNPNVGLDPEALSLATPRRDNIAGLVDFLKNPTTYDGLESIAEVHPSIKSADIYPRMRSVTDEDLTAMAGHILLQPKIVTEKWGGGKIYY</sequence>
<feature type="signal peptide" evidence="1">
    <location>
        <begin position="1"/>
        <end position="26"/>
    </location>
</feature>
<feature type="chain" id="PRO_0000295614" description="Photosystem II extrinsic protein V">
    <location>
        <begin position="27"/>
        <end position="163"/>
    </location>
</feature>
<feature type="binding site" description="covalent" evidence="1">
    <location>
        <position position="63"/>
    </location>
    <ligand>
        <name>heme c</name>
        <dbReference type="ChEBI" id="CHEBI:61717"/>
    </ligand>
</feature>
<feature type="binding site" description="covalent" evidence="1">
    <location>
        <position position="66"/>
    </location>
    <ligand>
        <name>heme c</name>
        <dbReference type="ChEBI" id="CHEBI:61717"/>
    </ligand>
</feature>
<feature type="binding site" description="axial binding residue" evidence="1">
    <location>
        <position position="67"/>
    </location>
    <ligand>
        <name>heme c</name>
        <dbReference type="ChEBI" id="CHEBI:61717"/>
    </ligand>
    <ligandPart>
        <name>Fe</name>
        <dbReference type="ChEBI" id="CHEBI:18248"/>
    </ligandPart>
</feature>
<feature type="binding site" description="axial binding residue" evidence="1">
    <location>
        <position position="130"/>
    </location>
    <ligand>
        <name>heme c</name>
        <dbReference type="ChEBI" id="CHEBI:61717"/>
    </ligand>
    <ligandPart>
        <name>Fe</name>
        <dbReference type="ChEBI" id="CHEBI:18248"/>
    </ligandPart>
</feature>
<reference key="1">
    <citation type="journal article" date="2007" name="Mol. Genet. Genomics">
        <title>Chloroplast genomes of the diatoms Phaeodactylum tricornutum and Thalassiosira pseudonana: comparison with other plastid genomes of the red lineage.</title>
        <authorList>
            <person name="Oudot-Le Secq M.-P."/>
            <person name="Grimwood J."/>
            <person name="Shapiro H."/>
            <person name="Armbrust E.V."/>
            <person name="Bowler C."/>
            <person name="Green B.R."/>
        </authorList>
    </citation>
    <scope>NUCLEOTIDE SEQUENCE [LARGE SCALE GENOMIC DNA]</scope>
    <source>
        <strain>CCAP 1055/1</strain>
    </source>
</reference>
<gene>
    <name evidence="1" type="primary">psbV</name>
</gene>
<accession>A0T0C6</accession>
<organism>
    <name type="scientific">Phaeodactylum tricornutum (strain CCAP 1055/1)</name>
    <dbReference type="NCBI Taxonomy" id="556484"/>
    <lineage>
        <taxon>Eukaryota</taxon>
        <taxon>Sar</taxon>
        <taxon>Stramenopiles</taxon>
        <taxon>Ochrophyta</taxon>
        <taxon>Bacillariophyta</taxon>
        <taxon>Bacillariophyceae</taxon>
        <taxon>Bacillariophycidae</taxon>
        <taxon>Naviculales</taxon>
        <taxon>Phaeodactylaceae</taxon>
        <taxon>Phaeodactylum</taxon>
    </lineage>
</organism>
<proteinExistence type="inferred from homology"/>
<dbReference type="EMBL" id="EF067920">
    <property type="protein sequence ID" value="ABK20624.1"/>
    <property type="molecule type" value="Genomic_DNA"/>
</dbReference>
<dbReference type="RefSeq" id="YP_874401.1">
    <property type="nucleotide sequence ID" value="NC_008588.1"/>
</dbReference>
<dbReference type="SMR" id="A0T0C6"/>
<dbReference type="STRING" id="556484.A0T0C6"/>
<dbReference type="GeneID" id="4524595"/>
<dbReference type="InParanoid" id="A0T0C6"/>
<dbReference type="Proteomes" id="UP000000759">
    <property type="component" value="Chloroplast"/>
</dbReference>
<dbReference type="GO" id="GO:0009535">
    <property type="term" value="C:chloroplast thylakoid membrane"/>
    <property type="evidence" value="ECO:0007669"/>
    <property type="project" value="UniProtKB-SubCell"/>
</dbReference>
<dbReference type="GO" id="GO:0009523">
    <property type="term" value="C:photosystem II"/>
    <property type="evidence" value="ECO:0007669"/>
    <property type="project" value="UniProtKB-KW"/>
</dbReference>
<dbReference type="GO" id="GO:0009055">
    <property type="term" value="F:electron transfer activity"/>
    <property type="evidence" value="ECO:0007669"/>
    <property type="project" value="InterPro"/>
</dbReference>
<dbReference type="GO" id="GO:0020037">
    <property type="term" value="F:heme binding"/>
    <property type="evidence" value="ECO:0007669"/>
    <property type="project" value="InterPro"/>
</dbReference>
<dbReference type="GO" id="GO:0005506">
    <property type="term" value="F:iron ion binding"/>
    <property type="evidence" value="ECO:0007669"/>
    <property type="project" value="InterPro"/>
</dbReference>
<dbReference type="GO" id="GO:0019684">
    <property type="term" value="P:photosynthesis, light reaction"/>
    <property type="evidence" value="ECO:0007669"/>
    <property type="project" value="UniProtKB-UniRule"/>
</dbReference>
<dbReference type="GO" id="GO:0022904">
    <property type="term" value="P:respiratory electron transport chain"/>
    <property type="evidence" value="ECO:0007669"/>
    <property type="project" value="InterPro"/>
</dbReference>
<dbReference type="Gene3D" id="1.10.760.10">
    <property type="entry name" value="Cytochrome c-like domain"/>
    <property type="match status" value="1"/>
</dbReference>
<dbReference type="HAMAP" id="MF_01378">
    <property type="entry name" value="PSII_Cyt550"/>
    <property type="match status" value="1"/>
</dbReference>
<dbReference type="InterPro" id="IPR009056">
    <property type="entry name" value="Cyt_c-like_dom"/>
</dbReference>
<dbReference type="InterPro" id="IPR036909">
    <property type="entry name" value="Cyt_c-like_dom_sf"/>
</dbReference>
<dbReference type="InterPro" id="IPR029490">
    <property type="entry name" value="Cytochrom_C550"/>
</dbReference>
<dbReference type="InterPro" id="IPR017851">
    <property type="entry name" value="PsbV_cyt_c550"/>
</dbReference>
<dbReference type="InterPro" id="IPR016003">
    <property type="entry name" value="PsbV_cyt_c550-like"/>
</dbReference>
<dbReference type="NCBIfam" id="TIGR03045">
    <property type="entry name" value="PS_II_C550"/>
    <property type="match status" value="1"/>
</dbReference>
<dbReference type="Pfam" id="PF14495">
    <property type="entry name" value="Cytochrom_C550"/>
    <property type="match status" value="1"/>
</dbReference>
<dbReference type="PIRSF" id="PIRSF005890">
    <property type="entry name" value="Phot_II_cyt_c550"/>
    <property type="match status" value="1"/>
</dbReference>
<dbReference type="SUPFAM" id="SSF46626">
    <property type="entry name" value="Cytochrome c"/>
    <property type="match status" value="1"/>
</dbReference>
<dbReference type="PROSITE" id="PS51007">
    <property type="entry name" value="CYTC"/>
    <property type="match status" value="1"/>
</dbReference>
<comment type="function">
    <text evidence="1">One of the extrinsic, lumenal subunits of photosystem II (PSII). PSII is a light-driven water plastoquinone oxidoreductase, using light energy to abstract electrons from H(2)O, generating a proton gradient subsequently used for ATP formation. The extrinsic proteins stabilize the structure of photosystem II oxygen-evolving complex (OEC), the ion environment of oxygen evolution and protect the OEC against heat-induced inactivation.</text>
</comment>
<comment type="cofactor">
    <cofactor evidence="1">
        <name>heme c</name>
        <dbReference type="ChEBI" id="CHEBI:61717"/>
    </cofactor>
    <text evidence="1">Binds 1 heme c group covalently per subunit.</text>
</comment>
<comment type="subunit">
    <text evidence="2">PSII is composed of 1 copy each of membrane proteins PsbA, PsbB, PsbC, PsbD, PsbE, PsbF, PsbH, PsbI, PsbJ, PsbK, PsbL, PsbM, PsbT, PsbY, PsbZ, Psb30/Ycf12, at least 3 peripheral proteins of the oxygen-evolving complex and a large number of cofactors. It forms dimeric complexes.</text>
</comment>
<comment type="subcellular location">
    <subcellularLocation>
        <location evidence="1">Plastid</location>
        <location evidence="1">Chloroplast thylakoid membrane</location>
        <topology evidence="1">Peripheral membrane protein</topology>
        <orientation evidence="1">Lumenal side</orientation>
    </subcellularLocation>
    <text evidence="1">Associated with photosystem II at the lumenal side of the thylakoid membrane.</text>
</comment>
<comment type="similarity">
    <text evidence="1">Belongs to the cytochrome c family. PsbV subfamily.</text>
</comment>
<protein>
    <recommendedName>
        <fullName evidence="1">Photosystem II extrinsic protein V</fullName>
        <shortName evidence="1">PsbV</shortName>
    </recommendedName>
    <alternativeName>
        <fullName evidence="1">Cytochrome c-550</fullName>
    </alternativeName>
    <alternativeName>
        <fullName evidence="1">Cytochrome c550</fullName>
    </alternativeName>
</protein>
<name>CY550_PHATC</name>